<organism>
    <name type="scientific">Homo sapiens</name>
    <name type="common">Human</name>
    <dbReference type="NCBI Taxonomy" id="9606"/>
    <lineage>
        <taxon>Eukaryota</taxon>
        <taxon>Metazoa</taxon>
        <taxon>Chordata</taxon>
        <taxon>Craniata</taxon>
        <taxon>Vertebrata</taxon>
        <taxon>Euteleostomi</taxon>
        <taxon>Mammalia</taxon>
        <taxon>Eutheria</taxon>
        <taxon>Euarchontoglires</taxon>
        <taxon>Primates</taxon>
        <taxon>Haplorrhini</taxon>
        <taxon>Catarrhini</taxon>
        <taxon>Hominidae</taxon>
        <taxon>Homo</taxon>
    </lineage>
</organism>
<reference key="1">
    <citation type="journal article" date="2004" name="Genomics">
        <title>TAFA: a novel secreted family with conserved cysteine residues and restricted expression in the brain.</title>
        <authorList>
            <person name="Tom Tang Y."/>
            <person name="Emtage P."/>
            <person name="Funk W.D."/>
            <person name="Hu T."/>
            <person name="Arterburn M."/>
            <person name="Park E.E."/>
            <person name="Rupp F."/>
        </authorList>
    </citation>
    <scope>NUCLEOTIDE SEQUENCE [MRNA]</scope>
    <scope>TISSUE SPECIFICITY</scope>
    <scope>SUBCELLULAR LOCATION</scope>
</reference>
<reference key="2">
    <citation type="journal article" date="2004" name="Nat. Genet.">
        <title>Complete sequencing and characterization of 21,243 full-length human cDNAs.</title>
        <authorList>
            <person name="Ota T."/>
            <person name="Suzuki Y."/>
            <person name="Nishikawa T."/>
            <person name="Otsuki T."/>
            <person name="Sugiyama T."/>
            <person name="Irie R."/>
            <person name="Wakamatsu A."/>
            <person name="Hayashi K."/>
            <person name="Sato H."/>
            <person name="Nagai K."/>
            <person name="Kimura K."/>
            <person name="Makita H."/>
            <person name="Sekine M."/>
            <person name="Obayashi M."/>
            <person name="Nishi T."/>
            <person name="Shibahara T."/>
            <person name="Tanaka T."/>
            <person name="Ishii S."/>
            <person name="Yamamoto J."/>
            <person name="Saito K."/>
            <person name="Kawai Y."/>
            <person name="Isono Y."/>
            <person name="Nakamura Y."/>
            <person name="Nagahari K."/>
            <person name="Murakami K."/>
            <person name="Yasuda T."/>
            <person name="Iwayanagi T."/>
            <person name="Wagatsuma M."/>
            <person name="Shiratori A."/>
            <person name="Sudo H."/>
            <person name="Hosoiri T."/>
            <person name="Kaku Y."/>
            <person name="Kodaira H."/>
            <person name="Kondo H."/>
            <person name="Sugawara M."/>
            <person name="Takahashi M."/>
            <person name="Kanda K."/>
            <person name="Yokoi T."/>
            <person name="Furuya T."/>
            <person name="Kikkawa E."/>
            <person name="Omura Y."/>
            <person name="Abe K."/>
            <person name="Kamihara K."/>
            <person name="Katsuta N."/>
            <person name="Sato K."/>
            <person name="Tanikawa M."/>
            <person name="Yamazaki M."/>
            <person name="Ninomiya K."/>
            <person name="Ishibashi T."/>
            <person name="Yamashita H."/>
            <person name="Murakawa K."/>
            <person name="Fujimori K."/>
            <person name="Tanai H."/>
            <person name="Kimata M."/>
            <person name="Watanabe M."/>
            <person name="Hiraoka S."/>
            <person name="Chiba Y."/>
            <person name="Ishida S."/>
            <person name="Ono Y."/>
            <person name="Takiguchi S."/>
            <person name="Watanabe S."/>
            <person name="Yosida M."/>
            <person name="Hotuta T."/>
            <person name="Kusano J."/>
            <person name="Kanehori K."/>
            <person name="Takahashi-Fujii A."/>
            <person name="Hara H."/>
            <person name="Tanase T.-O."/>
            <person name="Nomura Y."/>
            <person name="Togiya S."/>
            <person name="Komai F."/>
            <person name="Hara R."/>
            <person name="Takeuchi K."/>
            <person name="Arita M."/>
            <person name="Imose N."/>
            <person name="Musashino K."/>
            <person name="Yuuki H."/>
            <person name="Oshima A."/>
            <person name="Sasaki N."/>
            <person name="Aotsuka S."/>
            <person name="Yoshikawa Y."/>
            <person name="Matsunawa H."/>
            <person name="Ichihara T."/>
            <person name="Shiohata N."/>
            <person name="Sano S."/>
            <person name="Moriya S."/>
            <person name="Momiyama H."/>
            <person name="Satoh N."/>
            <person name="Takami S."/>
            <person name="Terashima Y."/>
            <person name="Suzuki O."/>
            <person name="Nakagawa S."/>
            <person name="Senoh A."/>
            <person name="Mizoguchi H."/>
            <person name="Goto Y."/>
            <person name="Shimizu F."/>
            <person name="Wakebe H."/>
            <person name="Hishigaki H."/>
            <person name="Watanabe T."/>
            <person name="Sugiyama A."/>
            <person name="Takemoto M."/>
            <person name="Kawakami B."/>
            <person name="Yamazaki M."/>
            <person name="Watanabe K."/>
            <person name="Kumagai A."/>
            <person name="Itakura S."/>
            <person name="Fukuzumi Y."/>
            <person name="Fujimori Y."/>
            <person name="Komiyama M."/>
            <person name="Tashiro H."/>
            <person name="Tanigami A."/>
            <person name="Fujiwara T."/>
            <person name="Ono T."/>
            <person name="Yamada K."/>
            <person name="Fujii Y."/>
            <person name="Ozaki K."/>
            <person name="Hirao M."/>
            <person name="Ohmori Y."/>
            <person name="Kawabata A."/>
            <person name="Hikiji T."/>
            <person name="Kobatake N."/>
            <person name="Inagaki H."/>
            <person name="Ikema Y."/>
            <person name="Okamoto S."/>
            <person name="Okitani R."/>
            <person name="Kawakami T."/>
            <person name="Noguchi S."/>
            <person name="Itoh T."/>
            <person name="Shigeta K."/>
            <person name="Senba T."/>
            <person name="Matsumura K."/>
            <person name="Nakajima Y."/>
            <person name="Mizuno T."/>
            <person name="Morinaga M."/>
            <person name="Sasaki M."/>
            <person name="Togashi T."/>
            <person name="Oyama M."/>
            <person name="Hata H."/>
            <person name="Watanabe M."/>
            <person name="Komatsu T."/>
            <person name="Mizushima-Sugano J."/>
            <person name="Satoh T."/>
            <person name="Shirai Y."/>
            <person name="Takahashi Y."/>
            <person name="Nakagawa K."/>
            <person name="Okumura K."/>
            <person name="Nagase T."/>
            <person name="Nomura N."/>
            <person name="Kikuchi H."/>
            <person name="Masuho Y."/>
            <person name="Yamashita R."/>
            <person name="Nakai K."/>
            <person name="Yada T."/>
            <person name="Nakamura Y."/>
            <person name="Ohara O."/>
            <person name="Isogai T."/>
            <person name="Sugano S."/>
        </authorList>
    </citation>
    <scope>NUCLEOTIDE SEQUENCE [LARGE SCALE MRNA]</scope>
    <source>
        <tissue>Brain</tissue>
    </source>
</reference>
<reference key="3">
    <citation type="journal article" date="2006" name="Nature">
        <title>The DNA sequence, annotation and analysis of human chromosome 3.</title>
        <authorList>
            <person name="Muzny D.M."/>
            <person name="Scherer S.E."/>
            <person name="Kaul R."/>
            <person name="Wang J."/>
            <person name="Yu J."/>
            <person name="Sudbrak R."/>
            <person name="Buhay C.J."/>
            <person name="Chen R."/>
            <person name="Cree A."/>
            <person name="Ding Y."/>
            <person name="Dugan-Rocha S."/>
            <person name="Gill R."/>
            <person name="Gunaratne P."/>
            <person name="Harris R.A."/>
            <person name="Hawes A.C."/>
            <person name="Hernandez J."/>
            <person name="Hodgson A.V."/>
            <person name="Hume J."/>
            <person name="Jackson A."/>
            <person name="Khan Z.M."/>
            <person name="Kovar-Smith C."/>
            <person name="Lewis L.R."/>
            <person name="Lozado R.J."/>
            <person name="Metzker M.L."/>
            <person name="Milosavljevic A."/>
            <person name="Miner G.R."/>
            <person name="Morgan M.B."/>
            <person name="Nazareth L.V."/>
            <person name="Scott G."/>
            <person name="Sodergren E."/>
            <person name="Song X.-Z."/>
            <person name="Steffen D."/>
            <person name="Wei S."/>
            <person name="Wheeler D.A."/>
            <person name="Wright M.W."/>
            <person name="Worley K.C."/>
            <person name="Yuan Y."/>
            <person name="Zhang Z."/>
            <person name="Adams C.Q."/>
            <person name="Ansari-Lari M.A."/>
            <person name="Ayele M."/>
            <person name="Brown M.J."/>
            <person name="Chen G."/>
            <person name="Chen Z."/>
            <person name="Clendenning J."/>
            <person name="Clerc-Blankenburg K.P."/>
            <person name="Chen R."/>
            <person name="Chen Z."/>
            <person name="Davis C."/>
            <person name="Delgado O."/>
            <person name="Dinh H.H."/>
            <person name="Dong W."/>
            <person name="Draper H."/>
            <person name="Ernst S."/>
            <person name="Fu G."/>
            <person name="Gonzalez-Garay M.L."/>
            <person name="Garcia D.K."/>
            <person name="Gillett W."/>
            <person name="Gu J."/>
            <person name="Hao B."/>
            <person name="Haugen E."/>
            <person name="Havlak P."/>
            <person name="He X."/>
            <person name="Hennig S."/>
            <person name="Hu S."/>
            <person name="Huang W."/>
            <person name="Jackson L.R."/>
            <person name="Jacob L.S."/>
            <person name="Kelly S.H."/>
            <person name="Kube M."/>
            <person name="Levy R."/>
            <person name="Li Z."/>
            <person name="Liu B."/>
            <person name="Liu J."/>
            <person name="Liu W."/>
            <person name="Lu J."/>
            <person name="Maheshwari M."/>
            <person name="Nguyen B.-V."/>
            <person name="Okwuonu G.O."/>
            <person name="Palmeiri A."/>
            <person name="Pasternak S."/>
            <person name="Perez L.M."/>
            <person name="Phelps K.A."/>
            <person name="Plopper F.J."/>
            <person name="Qiang B."/>
            <person name="Raymond C."/>
            <person name="Rodriguez R."/>
            <person name="Saenphimmachak C."/>
            <person name="Santibanez J."/>
            <person name="Shen H."/>
            <person name="Shen Y."/>
            <person name="Subramanian S."/>
            <person name="Tabor P.E."/>
            <person name="Verduzco D."/>
            <person name="Waldron L."/>
            <person name="Wang J."/>
            <person name="Wang J."/>
            <person name="Wang Q."/>
            <person name="Williams G.A."/>
            <person name="Wong G.K.-S."/>
            <person name="Yao Z."/>
            <person name="Zhang J."/>
            <person name="Zhang X."/>
            <person name="Zhao G."/>
            <person name="Zhou J."/>
            <person name="Zhou Y."/>
            <person name="Nelson D."/>
            <person name="Lehrach H."/>
            <person name="Reinhardt R."/>
            <person name="Naylor S.L."/>
            <person name="Yang H."/>
            <person name="Olson M."/>
            <person name="Weinstock G."/>
            <person name="Gibbs R.A."/>
        </authorList>
    </citation>
    <scope>NUCLEOTIDE SEQUENCE [LARGE SCALE GENOMIC DNA]</scope>
</reference>
<reference key="4">
    <citation type="submission" date="2005-07" db="EMBL/GenBank/DDBJ databases">
        <authorList>
            <person name="Mural R.J."/>
            <person name="Istrail S."/>
            <person name="Sutton G."/>
            <person name="Florea L."/>
            <person name="Halpern A.L."/>
            <person name="Mobarry C.M."/>
            <person name="Lippert R."/>
            <person name="Walenz B."/>
            <person name="Shatkay H."/>
            <person name="Dew I."/>
            <person name="Miller J.R."/>
            <person name="Flanigan M.J."/>
            <person name="Edwards N.J."/>
            <person name="Bolanos R."/>
            <person name="Fasulo D."/>
            <person name="Halldorsson B.V."/>
            <person name="Hannenhalli S."/>
            <person name="Turner R."/>
            <person name="Yooseph S."/>
            <person name="Lu F."/>
            <person name="Nusskern D.R."/>
            <person name="Shue B.C."/>
            <person name="Zheng X.H."/>
            <person name="Zhong F."/>
            <person name="Delcher A.L."/>
            <person name="Huson D.H."/>
            <person name="Kravitz S.A."/>
            <person name="Mouchard L."/>
            <person name="Reinert K."/>
            <person name="Remington K.A."/>
            <person name="Clark A.G."/>
            <person name="Waterman M.S."/>
            <person name="Eichler E.E."/>
            <person name="Adams M.D."/>
            <person name="Hunkapiller M.W."/>
            <person name="Myers E.W."/>
            <person name="Venter J.C."/>
        </authorList>
    </citation>
    <scope>NUCLEOTIDE SEQUENCE [LARGE SCALE GENOMIC DNA]</scope>
</reference>
<reference key="5">
    <citation type="journal article" date="2004" name="Genome Res.">
        <title>The status, quality, and expansion of the NIH full-length cDNA project: the Mammalian Gene Collection (MGC).</title>
        <authorList>
            <consortium name="The MGC Project Team"/>
        </authorList>
    </citation>
    <scope>NUCLEOTIDE SEQUENCE [LARGE SCALE MRNA]</scope>
    <source>
        <tissue>Brain</tissue>
    </source>
</reference>
<reference key="6">
    <citation type="journal article" date="2015" name="Cell. Mol. Immunol.">
        <title>FAM19A4 is a novel cytokine ligand of formyl peptide receptor 1 (FPR1) and is able to promote the migration and phagocytosis of macrophages.</title>
        <authorList>
            <person name="Wang W."/>
            <person name="Li T."/>
            <person name="Wang X."/>
            <person name="Yuan W."/>
            <person name="Cheng Y."/>
            <person name="Zhang H."/>
            <person name="Xu E."/>
            <person name="Zhang Y."/>
            <person name="Shi S."/>
            <person name="Ma D."/>
            <person name="Han W."/>
        </authorList>
    </citation>
    <scope>SUBCELLULAR LOCATION</scope>
    <scope>TISSUE SPECIFICITY</scope>
</reference>
<sequence length="140" mass="15682">MRSPRMRVCAKSVLLSHWLFLAYVLMVCCKLMSASSQHLRGHAGHHQIKQGTCEVVAVHRCCNKNRIEERSQTVKCSCFPGQVAGTTRAQPSCVEASIVIQKWWCHMNPCLEGEDCKVLPDYSGWSCSSGNKVKTTKVTR</sequence>
<protein>
    <recommendedName>
        <fullName evidence="5">Chemokine-like protein TAFA-4</fullName>
    </recommendedName>
</protein>
<proteinExistence type="evidence at protein level"/>
<name>TAFA4_HUMAN</name>
<dbReference type="EMBL" id="AY325117">
    <property type="protein sequence ID" value="AAP92409.1"/>
    <property type="molecule type" value="mRNA"/>
</dbReference>
<dbReference type="EMBL" id="AK057890">
    <property type="protein sequence ID" value="BAB71606.1"/>
    <property type="molecule type" value="mRNA"/>
</dbReference>
<dbReference type="EMBL" id="AC096922">
    <property type="status" value="NOT_ANNOTATED_CDS"/>
    <property type="molecule type" value="Genomic_DNA"/>
</dbReference>
<dbReference type="EMBL" id="AC104166">
    <property type="status" value="NOT_ANNOTATED_CDS"/>
    <property type="molecule type" value="Genomic_DNA"/>
</dbReference>
<dbReference type="EMBL" id="AC109587">
    <property type="status" value="NOT_ANNOTATED_CDS"/>
    <property type="molecule type" value="Genomic_DNA"/>
</dbReference>
<dbReference type="EMBL" id="CH471055">
    <property type="protein sequence ID" value="EAW65463.1"/>
    <property type="molecule type" value="Genomic_DNA"/>
</dbReference>
<dbReference type="EMBL" id="BC031566">
    <property type="protein sequence ID" value="AAH31566.1"/>
    <property type="molecule type" value="mRNA"/>
</dbReference>
<dbReference type="CCDS" id="CCDS2907.1"/>
<dbReference type="RefSeq" id="NP_001005527.1">
    <property type="nucleotide sequence ID" value="NM_001005527.3"/>
</dbReference>
<dbReference type="RefSeq" id="NP_872328.1">
    <property type="nucleotide sequence ID" value="NM_182522.5"/>
</dbReference>
<dbReference type="BioGRID" id="127394">
    <property type="interactions" value="82"/>
</dbReference>
<dbReference type="FunCoup" id="Q96LR4">
    <property type="interactions" value="311"/>
</dbReference>
<dbReference type="IntAct" id="Q96LR4">
    <property type="interactions" value="53"/>
</dbReference>
<dbReference type="STRING" id="9606.ENSP00000295569"/>
<dbReference type="BioMuta" id="FAM19A4"/>
<dbReference type="DMDM" id="74732248"/>
<dbReference type="MassIVE" id="Q96LR4"/>
<dbReference type="PaxDb" id="9606-ENSP00000295569"/>
<dbReference type="PeptideAtlas" id="Q96LR4"/>
<dbReference type="Antibodypedia" id="46378">
    <property type="antibodies" value="102 antibodies from 14 providers"/>
</dbReference>
<dbReference type="DNASU" id="151647"/>
<dbReference type="Ensembl" id="ENST00000295569.12">
    <property type="protein sequence ID" value="ENSP00000295569.7"/>
    <property type="gene ID" value="ENSG00000163377.16"/>
</dbReference>
<dbReference type="GeneID" id="151647"/>
<dbReference type="KEGG" id="hsa:151647"/>
<dbReference type="MANE-Select" id="ENST00000295569.12">
    <property type="protein sequence ID" value="ENSP00000295569.7"/>
    <property type="RefSeq nucleotide sequence ID" value="NM_182522.5"/>
    <property type="RefSeq protein sequence ID" value="NP_872328.1"/>
</dbReference>
<dbReference type="UCSC" id="uc021xag.2">
    <property type="organism name" value="human"/>
</dbReference>
<dbReference type="AGR" id="HGNC:21591"/>
<dbReference type="CTD" id="151647"/>
<dbReference type="DisGeNET" id="151647"/>
<dbReference type="GeneCards" id="TAFA4"/>
<dbReference type="HGNC" id="HGNC:21591">
    <property type="gene designation" value="TAFA4"/>
</dbReference>
<dbReference type="HPA" id="ENSG00000163377">
    <property type="expression patterns" value="Group enriched (adrenal gland, brain, retina, stomach)"/>
</dbReference>
<dbReference type="MIM" id="617498">
    <property type="type" value="gene"/>
</dbReference>
<dbReference type="neXtProt" id="NX_Q96LR4"/>
<dbReference type="OpenTargets" id="ENSG00000163377"/>
<dbReference type="PharmGKB" id="PA134873006"/>
<dbReference type="VEuPathDB" id="HostDB:ENSG00000163377"/>
<dbReference type="eggNOG" id="ENOG502RZN9">
    <property type="taxonomic scope" value="Eukaryota"/>
</dbReference>
<dbReference type="GeneTree" id="ENSGT00940000159882"/>
<dbReference type="HOGENOM" id="CLU_126078_3_0_1"/>
<dbReference type="InParanoid" id="Q96LR4"/>
<dbReference type="OMA" id="HWVFLAY"/>
<dbReference type="OrthoDB" id="9924724at2759"/>
<dbReference type="PAN-GO" id="Q96LR4">
    <property type="GO annotations" value="4 GO annotations based on evolutionary models"/>
</dbReference>
<dbReference type="PhylomeDB" id="Q96LR4"/>
<dbReference type="TreeFam" id="TF331749"/>
<dbReference type="PathwayCommons" id="Q96LR4"/>
<dbReference type="SignaLink" id="Q96LR4"/>
<dbReference type="BioGRID-ORCS" id="151647">
    <property type="hits" value="13 hits in 1144 CRISPR screens"/>
</dbReference>
<dbReference type="ChiTaRS" id="FAM19A4">
    <property type="organism name" value="human"/>
</dbReference>
<dbReference type="GenomeRNAi" id="151647"/>
<dbReference type="Pharos" id="Q96LR4">
    <property type="development level" value="Tbio"/>
</dbReference>
<dbReference type="PRO" id="PR:Q96LR4"/>
<dbReference type="Proteomes" id="UP000005640">
    <property type="component" value="Chromosome 3"/>
</dbReference>
<dbReference type="RNAct" id="Q96LR4">
    <property type="molecule type" value="protein"/>
</dbReference>
<dbReference type="Bgee" id="ENSG00000163377">
    <property type="expression patterns" value="Expressed in male germ line stem cell (sensu Vertebrata) in testis and 71 other cell types or tissues"/>
</dbReference>
<dbReference type="ExpressionAtlas" id="Q96LR4">
    <property type="expression patterns" value="baseline and differential"/>
</dbReference>
<dbReference type="GO" id="GO:0005615">
    <property type="term" value="C:extracellular space"/>
    <property type="evidence" value="ECO:0000314"/>
    <property type="project" value="MGI"/>
</dbReference>
<dbReference type="GO" id="GO:0098978">
    <property type="term" value="C:glutamatergic synapse"/>
    <property type="evidence" value="ECO:0007669"/>
    <property type="project" value="Ensembl"/>
</dbReference>
<dbReference type="GO" id="GO:0030672">
    <property type="term" value="C:synaptic vesicle membrane"/>
    <property type="evidence" value="ECO:0007669"/>
    <property type="project" value="Ensembl"/>
</dbReference>
<dbReference type="GO" id="GO:0048018">
    <property type="term" value="F:receptor ligand activity"/>
    <property type="evidence" value="ECO:0000250"/>
    <property type="project" value="UniProtKB"/>
</dbReference>
<dbReference type="GO" id="GO:0048246">
    <property type="term" value="P:macrophage chemotaxis"/>
    <property type="evidence" value="ECO:0000250"/>
    <property type="project" value="UniProtKB"/>
</dbReference>
<dbReference type="GO" id="GO:0006909">
    <property type="term" value="P:phagocytosis"/>
    <property type="evidence" value="ECO:0000250"/>
    <property type="project" value="UniProtKB"/>
</dbReference>
<dbReference type="GO" id="GO:0042391">
    <property type="term" value="P:regulation of membrane potential"/>
    <property type="evidence" value="ECO:0007669"/>
    <property type="project" value="Ensembl"/>
</dbReference>
<dbReference type="GO" id="GO:0051930">
    <property type="term" value="P:regulation of sensory perception of pain"/>
    <property type="evidence" value="ECO:0007669"/>
    <property type="project" value="Ensembl"/>
</dbReference>
<dbReference type="GO" id="GO:0010469">
    <property type="term" value="P:regulation of signaling receptor activity"/>
    <property type="evidence" value="ECO:0000250"/>
    <property type="project" value="UniProtKB"/>
</dbReference>
<dbReference type="GO" id="GO:0042554">
    <property type="term" value="P:superoxide anion generation"/>
    <property type="evidence" value="ECO:0000250"/>
    <property type="project" value="UniProtKB"/>
</dbReference>
<dbReference type="InterPro" id="IPR020350">
    <property type="entry name" value="Chemokine-like_TAFA"/>
</dbReference>
<dbReference type="InterPro" id="IPR051743">
    <property type="entry name" value="TAFA_chemokine-like"/>
</dbReference>
<dbReference type="PANTHER" id="PTHR31770">
    <property type="entry name" value="CHEMOKINE-LIKE PROTEIN TAFA FAMILY MEMBER"/>
    <property type="match status" value="1"/>
</dbReference>
<dbReference type="PANTHER" id="PTHR31770:SF7">
    <property type="entry name" value="CHEMOKINE-LIKE PROTEIN TAFA-4"/>
    <property type="match status" value="1"/>
</dbReference>
<dbReference type="Pfam" id="PF12020">
    <property type="entry name" value="TAFA"/>
    <property type="match status" value="1"/>
</dbReference>
<gene>
    <name evidence="6" type="primary">TAFA4</name>
    <name evidence="6" type="synonym">FAM19A4</name>
</gene>
<evidence type="ECO:0000250" key="1">
    <source>
        <dbReference type="UniProtKB" id="Q7TPG5"/>
    </source>
</evidence>
<evidence type="ECO:0000255" key="2"/>
<evidence type="ECO:0000269" key="3">
    <source>
    </source>
</evidence>
<evidence type="ECO:0000269" key="4">
    <source>
    </source>
</evidence>
<evidence type="ECO:0000305" key="5"/>
<evidence type="ECO:0000312" key="6">
    <source>
        <dbReference type="HGNC" id="HGNC:21591"/>
    </source>
</evidence>
<comment type="function">
    <text evidence="1 4">Modulates injury-induced and chemical pain hypersensitivity (By similarity). Ligand of FPR1, can chemoattract macrophages, promote phagocytosis and increase ROS release (PubMed:25109685).</text>
</comment>
<comment type="interaction">
    <interactant intactId="EBI-10290841">
        <id>Q96LR4</id>
    </interactant>
    <interactant intactId="EBI-743771">
        <id>Q92624</id>
        <label>APPBP2</label>
    </interactant>
    <organismsDiffer>false</organismsDiffer>
    <experiments>3</experiments>
</comment>
<comment type="subcellular location">
    <subcellularLocation>
        <location evidence="3 4">Secreted</location>
    </subcellularLocation>
</comment>
<comment type="tissue specificity">
    <text evidence="3 4">Expressed in brain (PubMed:15028294). Expressed in LPS-stimulated monocytes and macrophages, especially in polarized M1 (PubMed:25109685).</text>
</comment>
<comment type="similarity">
    <text evidence="5">Belongs to the TAFA family.</text>
</comment>
<accession>Q96LR4</accession>
<accession>A8MVT2</accession>
<feature type="signal peptide" evidence="2">
    <location>
        <begin position="1"/>
        <end position="35"/>
    </location>
</feature>
<feature type="chain" id="PRO_0000042728" description="Chemokine-like protein TAFA-4">
    <location>
        <begin position="36"/>
        <end position="140"/>
    </location>
</feature>
<keyword id="KW-1267">Proteomics identification</keyword>
<keyword id="KW-1185">Reference proteome</keyword>
<keyword id="KW-0964">Secreted</keyword>
<keyword id="KW-0732">Signal</keyword>